<protein>
    <recommendedName>
        <fullName evidence="1">Zinc transporter ZupT</fullName>
    </recommendedName>
</protein>
<dbReference type="EMBL" id="CP000653">
    <property type="protein sequence ID" value="ABP62111.1"/>
    <property type="molecule type" value="Genomic_DNA"/>
</dbReference>
<dbReference type="RefSeq" id="WP_015960439.1">
    <property type="nucleotide sequence ID" value="NC_009436.1"/>
</dbReference>
<dbReference type="SMR" id="A4WEI1"/>
<dbReference type="STRING" id="399742.Ent638_3452"/>
<dbReference type="KEGG" id="ent:Ent638_3452"/>
<dbReference type="eggNOG" id="COG0428">
    <property type="taxonomic scope" value="Bacteria"/>
</dbReference>
<dbReference type="HOGENOM" id="CLU_015114_1_3_6"/>
<dbReference type="OrthoDB" id="9787346at2"/>
<dbReference type="Proteomes" id="UP000000230">
    <property type="component" value="Chromosome"/>
</dbReference>
<dbReference type="GO" id="GO:0005886">
    <property type="term" value="C:plasma membrane"/>
    <property type="evidence" value="ECO:0007669"/>
    <property type="project" value="UniProtKB-SubCell"/>
</dbReference>
<dbReference type="GO" id="GO:0046872">
    <property type="term" value="F:metal ion binding"/>
    <property type="evidence" value="ECO:0007669"/>
    <property type="project" value="UniProtKB-KW"/>
</dbReference>
<dbReference type="GO" id="GO:0005385">
    <property type="term" value="F:zinc ion transmembrane transporter activity"/>
    <property type="evidence" value="ECO:0007669"/>
    <property type="project" value="UniProtKB-UniRule"/>
</dbReference>
<dbReference type="HAMAP" id="MF_00548">
    <property type="entry name" value="ZupT"/>
    <property type="match status" value="1"/>
</dbReference>
<dbReference type="InterPro" id="IPR003689">
    <property type="entry name" value="ZIP"/>
</dbReference>
<dbReference type="InterPro" id="IPR023498">
    <property type="entry name" value="Zn_transptr_ZupT"/>
</dbReference>
<dbReference type="NCBIfam" id="NF003243">
    <property type="entry name" value="PRK04201.1"/>
    <property type="match status" value="1"/>
</dbReference>
<dbReference type="PANTHER" id="PTHR11040:SF205">
    <property type="entry name" value="ZINC TRANSPORTER ZUPT"/>
    <property type="match status" value="1"/>
</dbReference>
<dbReference type="PANTHER" id="PTHR11040">
    <property type="entry name" value="ZINC/IRON TRANSPORTER"/>
    <property type="match status" value="1"/>
</dbReference>
<dbReference type="Pfam" id="PF02535">
    <property type="entry name" value="Zip"/>
    <property type="match status" value="2"/>
</dbReference>
<organism>
    <name type="scientific">Enterobacter sp. (strain 638)</name>
    <dbReference type="NCBI Taxonomy" id="399742"/>
    <lineage>
        <taxon>Bacteria</taxon>
        <taxon>Pseudomonadati</taxon>
        <taxon>Pseudomonadota</taxon>
        <taxon>Gammaproteobacteria</taxon>
        <taxon>Enterobacterales</taxon>
        <taxon>Enterobacteriaceae</taxon>
        <taxon>Enterobacter</taxon>
    </lineage>
</organism>
<evidence type="ECO:0000255" key="1">
    <source>
        <dbReference type="HAMAP-Rule" id="MF_00548"/>
    </source>
</evidence>
<gene>
    <name evidence="1" type="primary">zupT</name>
    <name type="ordered locus">Ent638_3452</name>
</gene>
<accession>A4WEI1</accession>
<name>ZUPT_ENT38</name>
<keyword id="KW-0997">Cell inner membrane</keyword>
<keyword id="KW-1003">Cell membrane</keyword>
<keyword id="KW-0406">Ion transport</keyword>
<keyword id="KW-0408">Iron</keyword>
<keyword id="KW-0472">Membrane</keyword>
<keyword id="KW-0479">Metal-binding</keyword>
<keyword id="KW-0812">Transmembrane</keyword>
<keyword id="KW-1133">Transmembrane helix</keyword>
<keyword id="KW-0813">Transport</keyword>
<keyword id="KW-0862">Zinc</keyword>
<keyword id="KW-0864">Zinc transport</keyword>
<comment type="function">
    <text evidence="1">Mediates zinc uptake. May also transport other divalent cations.</text>
</comment>
<comment type="catalytic activity">
    <reaction evidence="1">
        <text>Zn(2+)(in) = Zn(2+)(out)</text>
        <dbReference type="Rhea" id="RHEA:29351"/>
        <dbReference type="ChEBI" id="CHEBI:29105"/>
    </reaction>
</comment>
<comment type="subcellular location">
    <subcellularLocation>
        <location evidence="1">Cell inner membrane</location>
        <topology evidence="1">Multi-pass membrane protein</topology>
    </subcellularLocation>
</comment>
<comment type="similarity">
    <text evidence="1">Belongs to the ZIP transporter (TC 2.A.5) family. ZupT subfamily.</text>
</comment>
<reference key="1">
    <citation type="journal article" date="2010" name="PLoS Genet.">
        <title>Genome sequence of the plant growth promoting endophytic bacterium Enterobacter sp. 638.</title>
        <authorList>
            <person name="Taghavi S."/>
            <person name="van der Lelie D."/>
            <person name="Hoffman A."/>
            <person name="Zhang Y.B."/>
            <person name="Walla M.D."/>
            <person name="Vangronsveld J."/>
            <person name="Newman L."/>
            <person name="Monchy S."/>
        </authorList>
    </citation>
    <scope>NUCLEOTIDE SEQUENCE [LARGE SCALE GENOMIC DNA]</scope>
    <source>
        <strain>638</strain>
    </source>
</reference>
<sequence>MSVPLILTLLAGAATFIGAILGVIGQKPSNRVLAFSLGFAAGIMLLISLMEMLPAALRTDGMSPVMGYGMFVVGLLGYFALDKMLPHAHPQDLMQKNAKPTRGNIKRTAILLTLGISLHNFPEGVATYVTASNNLELGFGIALAVALHNIPEGLAVAGPVYAATGSKRTAILWAGISGLAEILGGVLTWLILGSMISPVVMAAIMAAVAGIMVALSVDELMPLAKEIDPNNNPSYGVLCGMSVMGLSLVLLQTAGFG</sequence>
<proteinExistence type="inferred from homology"/>
<feature type="chain" id="PRO_1000061084" description="Zinc transporter ZupT">
    <location>
        <begin position="1"/>
        <end position="257"/>
    </location>
</feature>
<feature type="transmembrane region" description="Helical" evidence="1">
    <location>
        <begin position="5"/>
        <end position="25"/>
    </location>
</feature>
<feature type="transmembrane region" description="Helical" evidence="1">
    <location>
        <begin position="32"/>
        <end position="52"/>
    </location>
</feature>
<feature type="transmembrane region" description="Helical" evidence="1">
    <location>
        <begin position="61"/>
        <end position="81"/>
    </location>
</feature>
<feature type="transmembrane region" description="Helical" evidence="1">
    <location>
        <begin position="109"/>
        <end position="129"/>
    </location>
</feature>
<feature type="transmembrane region" description="Helical" evidence="1">
    <location>
        <begin position="137"/>
        <end position="157"/>
    </location>
</feature>
<feature type="transmembrane region" description="Helical" evidence="1">
    <location>
        <begin position="171"/>
        <end position="191"/>
    </location>
</feature>
<feature type="transmembrane region" description="Helical" evidence="1">
    <location>
        <begin position="195"/>
        <end position="215"/>
    </location>
</feature>
<feature type="transmembrane region" description="Helical" evidence="1">
    <location>
        <begin position="236"/>
        <end position="256"/>
    </location>
</feature>
<feature type="binding site" description="M2 metal binding site" evidence="1">
    <location>
        <position position="120"/>
    </location>
    <ligand>
        <name>Fe(2+)</name>
        <dbReference type="ChEBI" id="CHEBI:29033"/>
    </ligand>
</feature>
<feature type="binding site" description="M2 metal binding site" evidence="1">
    <location>
        <position position="123"/>
    </location>
    <ligand>
        <name>Fe(2+)</name>
        <dbReference type="ChEBI" id="CHEBI:29033"/>
    </ligand>
</feature>
<feature type="binding site" description="M1 metal binding site" evidence="1">
    <location>
        <position position="123"/>
    </location>
    <ligand>
        <name>Zn(2+)</name>
        <dbReference type="ChEBI" id="CHEBI:29105"/>
    </ligand>
</feature>
<feature type="binding site" description="M1 metal binding site" evidence="1">
    <location>
        <position position="148"/>
    </location>
    <ligand>
        <name>Zn(2+)</name>
        <dbReference type="ChEBI" id="CHEBI:29105"/>
    </ligand>
</feature>
<feature type="binding site" description="M2 metal binding site" evidence="1">
    <location>
        <position position="149"/>
    </location>
    <ligand>
        <name>Fe(2+)</name>
        <dbReference type="ChEBI" id="CHEBI:29033"/>
    </ligand>
</feature>
<feature type="binding site" description="M2 metal binding site" evidence="1">
    <location>
        <position position="152"/>
    </location>
    <ligand>
        <name>Fe(2+)</name>
        <dbReference type="ChEBI" id="CHEBI:29033"/>
    </ligand>
</feature>
<feature type="binding site" description="M1 metal binding site" evidence="1">
    <location>
        <position position="152"/>
    </location>
    <ligand>
        <name>Zn(2+)</name>
        <dbReference type="ChEBI" id="CHEBI:29105"/>
    </ligand>
</feature>
<feature type="binding site" description="M2 metal binding site" evidence="1">
    <location>
        <position position="181"/>
    </location>
    <ligand>
        <name>Fe(2+)</name>
        <dbReference type="ChEBI" id="CHEBI:29033"/>
    </ligand>
</feature>